<protein>
    <recommendedName>
        <fullName evidence="4">Hyposin-H4</fullName>
        <shortName evidence="4">HPS-H4</shortName>
    </recommendedName>
    <alternativeName>
        <fullName evidence="4">Hyposin-3</fullName>
    </alternativeName>
    <alternativeName>
        <fullName evidence="3">Hyposin-HA3</fullName>
    </alternativeName>
</protein>
<name>HPS4_PITAZ</name>
<evidence type="ECO:0000250" key="1">
    <source>
        <dbReference type="UniProtKB" id="P84524"/>
    </source>
</evidence>
<evidence type="ECO:0000269" key="2">
    <source>
    </source>
</evidence>
<evidence type="ECO:0000303" key="3">
    <source>
    </source>
</evidence>
<evidence type="ECO:0000303" key="4">
    <source>
    </source>
</evidence>
<evidence type="ECO:0000305" key="5"/>
<accession>P84956</accession>
<comment type="function">
    <text evidence="1">Has antimicrobial activity.</text>
</comment>
<comment type="subcellular location">
    <subcellularLocation>
        <location evidence="2">Secreted</location>
    </subcellularLocation>
</comment>
<comment type="tissue specificity">
    <text evidence="2">Expressed by the skin glands.</text>
</comment>
<comment type="mass spectrometry" mass="1335.87" method="MALDI" evidence="2"/>
<comment type="similarity">
    <text evidence="5">Belongs to the frog skin active peptide (FSAP) family. Hyposin subfamily.</text>
</comment>
<comment type="online information" name="The antimicrobial peptide database">
    <link uri="https://wangapd3.com/database/query_output.php?ID=00905"/>
</comment>
<organism>
    <name type="scientific">Pithecopus azureus</name>
    <name type="common">Orange-legged monkey tree frog</name>
    <name type="synonym">Phyllomedusa azurea</name>
    <dbReference type="NCBI Taxonomy" id="2034991"/>
    <lineage>
        <taxon>Eukaryota</taxon>
        <taxon>Metazoa</taxon>
        <taxon>Chordata</taxon>
        <taxon>Craniata</taxon>
        <taxon>Vertebrata</taxon>
        <taxon>Euteleostomi</taxon>
        <taxon>Amphibia</taxon>
        <taxon>Batrachia</taxon>
        <taxon>Anura</taxon>
        <taxon>Neobatrachia</taxon>
        <taxon>Hyloidea</taxon>
        <taxon>Hylidae</taxon>
        <taxon>Phyllomedusinae</taxon>
        <taxon>Pithecopus</taxon>
    </lineage>
</organism>
<proteinExistence type="evidence at protein level"/>
<dbReference type="GO" id="GO:0005576">
    <property type="term" value="C:extracellular region"/>
    <property type="evidence" value="ECO:0007669"/>
    <property type="project" value="UniProtKB-SubCell"/>
</dbReference>
<dbReference type="GO" id="GO:0042742">
    <property type="term" value="P:defense response to bacterium"/>
    <property type="evidence" value="ECO:0007669"/>
    <property type="project" value="UniProtKB-KW"/>
</dbReference>
<sequence length="12" mass="1338">LRPAVIVRTKGK</sequence>
<keyword id="KW-0027">Amidation</keyword>
<keyword id="KW-0878">Amphibian defense peptide</keyword>
<keyword id="KW-0044">Antibiotic</keyword>
<keyword id="KW-0929">Antimicrobial</keyword>
<keyword id="KW-0903">Direct protein sequencing</keyword>
<keyword id="KW-0964">Secreted</keyword>
<reference evidence="5" key="1">
    <citation type="journal article" date="2007" name="J. Proteome Res.">
        <title>Amphibian skin secretomics: application of parallel quadrupole time-of-flight mass spectrometry and peptide precursor cDNA cloning to rapidly characterize the skin secretory peptidome of Phyllomedusa hypochondrialis azurea: discovery of a novel peptide family, the hyposins.</title>
        <authorList>
            <person name="Thompson A.H."/>
            <person name="Bjourson A.J."/>
            <person name="Orr D.F."/>
            <person name="Shaw C."/>
            <person name="McClean S."/>
        </authorList>
    </citation>
    <scope>PROTEIN SEQUENCE</scope>
    <scope>SUBCELLULAR LOCATION</scope>
    <scope>TISSUE SPECIFICITY</scope>
    <scope>MASS SPECTROMETRY</scope>
    <scope>AMIDATION AT LYS-12</scope>
    <source>
        <tissue evidence="2">Skin secretion</tissue>
    </source>
</reference>
<reference key="2">
    <citation type="journal article" date="2008" name="Peptides">
        <title>A consistent nomenclature of antimicrobial peptides isolated from frogs of the subfamily Phyllomedusinae.</title>
        <authorList>
            <person name="Amiche M."/>
            <person name="Ladram A."/>
            <person name="Nicolas P."/>
        </authorList>
    </citation>
    <scope>NOMENCLATURE</scope>
</reference>
<feature type="peptide" id="PRO_0000250431" description="Hyposin-H4" evidence="2">
    <location>
        <begin position="1"/>
        <end position="12"/>
    </location>
</feature>
<feature type="modified residue" description="Lysine amide" evidence="2">
    <location>
        <position position="12"/>
    </location>
</feature>